<gene>
    <name evidence="1" type="primary">psd</name>
    <name type="ordered locus">CF0087</name>
</gene>
<proteinExistence type="inferred from homology"/>
<evidence type="ECO:0000255" key="1">
    <source>
        <dbReference type="HAMAP-Rule" id="MF_00663"/>
    </source>
</evidence>
<name>PSD_CHLFF</name>
<accession>Q256C9</accession>
<feature type="chain" id="PRO_1000026604" description="Phosphatidylserine decarboxylase beta chain" evidence="1">
    <location>
        <begin position="1"/>
        <end position="257"/>
    </location>
</feature>
<feature type="chain" id="PRO_1000026605" description="Phosphatidylserine decarboxylase alpha chain" evidence="1">
    <location>
        <begin position="258"/>
        <end position="299"/>
    </location>
</feature>
<feature type="active site" description="Charge relay system; for autoendoproteolytic cleavage activity" evidence="1">
    <location>
        <position position="115"/>
    </location>
</feature>
<feature type="active site" description="Charge relay system; for autoendoproteolytic cleavage activity" evidence="1">
    <location>
        <position position="171"/>
    </location>
</feature>
<feature type="active site" description="Charge relay system; for autoendoproteolytic cleavage activity" evidence="1">
    <location>
        <position position="258"/>
    </location>
</feature>
<feature type="active site" description="Schiff-base intermediate with substrate; via pyruvic acid; for decarboxylase activity" evidence="1">
    <location>
        <position position="258"/>
    </location>
</feature>
<feature type="site" description="Cleavage (non-hydrolytic); by autocatalysis" evidence="1">
    <location>
        <begin position="257"/>
        <end position="258"/>
    </location>
</feature>
<feature type="modified residue" description="Pyruvic acid (Ser); by autocatalysis" evidence="1">
    <location>
        <position position="258"/>
    </location>
</feature>
<keyword id="KW-1003">Cell membrane</keyword>
<keyword id="KW-0210">Decarboxylase</keyword>
<keyword id="KW-0444">Lipid biosynthesis</keyword>
<keyword id="KW-0443">Lipid metabolism</keyword>
<keyword id="KW-0456">Lyase</keyword>
<keyword id="KW-0472">Membrane</keyword>
<keyword id="KW-0594">Phospholipid biosynthesis</keyword>
<keyword id="KW-1208">Phospholipid metabolism</keyword>
<keyword id="KW-0670">Pyruvate</keyword>
<keyword id="KW-0865">Zymogen</keyword>
<reference key="1">
    <citation type="journal article" date="2006" name="DNA Res.">
        <title>Genome sequence of the cat pathogen, Chlamydophila felis.</title>
        <authorList>
            <person name="Azuma Y."/>
            <person name="Hirakawa H."/>
            <person name="Yamashita A."/>
            <person name="Cai Y."/>
            <person name="Rahman M.A."/>
            <person name="Suzuki H."/>
            <person name="Mitaku S."/>
            <person name="Toh H."/>
            <person name="Goto S."/>
            <person name="Murakami T."/>
            <person name="Sugi K."/>
            <person name="Hayashi H."/>
            <person name="Fukushi H."/>
            <person name="Hattori M."/>
            <person name="Kuhara S."/>
            <person name="Shirai M."/>
        </authorList>
    </citation>
    <scope>NUCLEOTIDE SEQUENCE [LARGE SCALE GENOMIC DNA]</scope>
    <source>
        <strain>Fe/C-56</strain>
    </source>
</reference>
<sequence length="299" mass="34095">MKKLQYIDRLTNQRVTEAVCYEKTMTLLYTSRLGKWLSTLLAKTPILSRIYGWIQKRSWTRRKIPGFVKRNHICVQEFKKSLSEFSSFNDFFTRELRPEARPIAQGDNICVAPVDGAYLIYPNIAEFGEFVVKSKHFSLSKLLGDASLVEKYASGSVVFARLALFDYHRFHFPVDCWAGPTRNVNGYLFSVHPMALKDNFNIFCENKRTLTELKTEAFGDVLYLEVGALNVGSIIQTYAPEKRYSKGDEKGFFEIGGSTVIILFQPGTIKFDADLLRNSRMGLETRCLMGQSLGRSLGE</sequence>
<comment type="function">
    <text evidence="1">Catalyzes the formation of phosphatidylethanolamine (PtdEtn) from phosphatidylserine (PtdSer).</text>
</comment>
<comment type="catalytic activity">
    <reaction evidence="1">
        <text>a 1,2-diacyl-sn-glycero-3-phospho-L-serine + H(+) = a 1,2-diacyl-sn-glycero-3-phosphoethanolamine + CO2</text>
        <dbReference type="Rhea" id="RHEA:20828"/>
        <dbReference type="ChEBI" id="CHEBI:15378"/>
        <dbReference type="ChEBI" id="CHEBI:16526"/>
        <dbReference type="ChEBI" id="CHEBI:57262"/>
        <dbReference type="ChEBI" id="CHEBI:64612"/>
        <dbReference type="EC" id="4.1.1.65"/>
    </reaction>
</comment>
<comment type="cofactor">
    <cofactor evidence="1">
        <name>pyruvate</name>
        <dbReference type="ChEBI" id="CHEBI:15361"/>
    </cofactor>
    <text evidence="1">Binds 1 pyruvoyl group covalently per subunit.</text>
</comment>
<comment type="pathway">
    <text evidence="1">Phospholipid metabolism; phosphatidylethanolamine biosynthesis; phosphatidylethanolamine from CDP-diacylglycerol: step 2/2.</text>
</comment>
<comment type="subunit">
    <text evidence="1">Heterodimer of a large membrane-associated beta subunit and a small pyruvoyl-containing alpha subunit.</text>
</comment>
<comment type="subcellular location">
    <subcellularLocation>
        <location evidence="1">Cell membrane</location>
        <topology evidence="1">Peripheral membrane protein</topology>
    </subcellularLocation>
</comment>
<comment type="PTM">
    <text evidence="1">Is synthesized initially as an inactive proenzyme. Formation of the active enzyme involves a self-maturation process in which the active site pyruvoyl group is generated from an internal serine residue via an autocatalytic post-translational modification. Two non-identical subunits are generated from the proenzyme in this reaction, and the pyruvate is formed at the N-terminus of the alpha chain, which is derived from the carboxyl end of the proenzyme. The autoendoproteolytic cleavage occurs by a canonical serine protease mechanism, in which the side chain hydroxyl group of the serine supplies its oxygen atom to form the C-terminus of the beta chain, while the remainder of the serine residue undergoes an oxidative deamination to produce ammonia and the pyruvoyl prosthetic group on the alpha chain. During this reaction, the Ser that is part of the protease active site of the proenzyme becomes the pyruvoyl prosthetic group, which constitutes an essential element of the active site of the mature decarboxylase.</text>
</comment>
<comment type="similarity">
    <text evidence="1">Belongs to the phosphatidylserine decarboxylase family. PSD-B subfamily. Prokaryotic type II sub-subfamily.</text>
</comment>
<dbReference type="EC" id="4.1.1.65" evidence="1"/>
<dbReference type="EMBL" id="AP006861">
    <property type="protein sequence ID" value="BAE80859.1"/>
    <property type="molecule type" value="Genomic_DNA"/>
</dbReference>
<dbReference type="RefSeq" id="WP_011457644.1">
    <property type="nucleotide sequence ID" value="NC_007899.1"/>
</dbReference>
<dbReference type="SMR" id="Q256C9"/>
<dbReference type="STRING" id="264202.CF0087"/>
<dbReference type="KEGG" id="cfe:CF0087"/>
<dbReference type="eggNOG" id="COG0688">
    <property type="taxonomic scope" value="Bacteria"/>
</dbReference>
<dbReference type="HOGENOM" id="CLU_029061_2_2_0"/>
<dbReference type="OrthoDB" id="9802030at2"/>
<dbReference type="UniPathway" id="UPA00558">
    <property type="reaction ID" value="UER00616"/>
</dbReference>
<dbReference type="Proteomes" id="UP000001260">
    <property type="component" value="Chromosome"/>
</dbReference>
<dbReference type="GO" id="GO:0005886">
    <property type="term" value="C:plasma membrane"/>
    <property type="evidence" value="ECO:0007669"/>
    <property type="project" value="UniProtKB-SubCell"/>
</dbReference>
<dbReference type="GO" id="GO:0004609">
    <property type="term" value="F:phosphatidylserine decarboxylase activity"/>
    <property type="evidence" value="ECO:0007669"/>
    <property type="project" value="UniProtKB-UniRule"/>
</dbReference>
<dbReference type="GO" id="GO:0006646">
    <property type="term" value="P:phosphatidylethanolamine biosynthetic process"/>
    <property type="evidence" value="ECO:0007669"/>
    <property type="project" value="UniProtKB-UniRule"/>
</dbReference>
<dbReference type="HAMAP" id="MF_00663">
    <property type="entry name" value="PS_decarb_PSD_B_type2"/>
    <property type="match status" value="1"/>
</dbReference>
<dbReference type="InterPro" id="IPR003817">
    <property type="entry name" value="PS_Dcarbxylase"/>
</dbReference>
<dbReference type="InterPro" id="IPR033177">
    <property type="entry name" value="PSD-B"/>
</dbReference>
<dbReference type="InterPro" id="IPR033179">
    <property type="entry name" value="PSD_type2_pro"/>
</dbReference>
<dbReference type="NCBIfam" id="NF001941">
    <property type="entry name" value="PRK00723.1"/>
    <property type="match status" value="1"/>
</dbReference>
<dbReference type="NCBIfam" id="TIGR00163">
    <property type="entry name" value="PS_decarb"/>
    <property type="match status" value="1"/>
</dbReference>
<dbReference type="PANTHER" id="PTHR10067">
    <property type="entry name" value="PHOSPHATIDYLSERINE DECARBOXYLASE"/>
    <property type="match status" value="1"/>
</dbReference>
<dbReference type="PANTHER" id="PTHR10067:SF17">
    <property type="entry name" value="PHOSPHATIDYLSERINE DECARBOXYLASE PROENZYME 2"/>
    <property type="match status" value="1"/>
</dbReference>
<dbReference type="Pfam" id="PF02666">
    <property type="entry name" value="PS_Dcarbxylase"/>
    <property type="match status" value="1"/>
</dbReference>
<organism>
    <name type="scientific">Chlamydia felis (strain Fe/C-56)</name>
    <name type="common">Chlamydophila felis</name>
    <dbReference type="NCBI Taxonomy" id="264202"/>
    <lineage>
        <taxon>Bacteria</taxon>
        <taxon>Pseudomonadati</taxon>
        <taxon>Chlamydiota</taxon>
        <taxon>Chlamydiia</taxon>
        <taxon>Chlamydiales</taxon>
        <taxon>Chlamydiaceae</taxon>
        <taxon>Chlamydia/Chlamydophila group</taxon>
        <taxon>Chlamydia</taxon>
    </lineage>
</organism>
<protein>
    <recommendedName>
        <fullName evidence="1">Phosphatidylserine decarboxylase proenzyme</fullName>
        <ecNumber evidence="1">4.1.1.65</ecNumber>
    </recommendedName>
    <component>
        <recommendedName>
            <fullName evidence="1">Phosphatidylserine decarboxylase alpha chain</fullName>
        </recommendedName>
    </component>
    <component>
        <recommendedName>
            <fullName evidence="1">Phosphatidylserine decarboxylase beta chain</fullName>
        </recommendedName>
    </component>
</protein>